<proteinExistence type="inferred from homology"/>
<accession>B1AI43</accession>
<dbReference type="EMBL" id="CP000942">
    <property type="protein sequence ID" value="ACA32907.1"/>
    <property type="molecule type" value="Genomic_DNA"/>
</dbReference>
<dbReference type="RefSeq" id="WP_006688578.1">
    <property type="nucleotide sequence ID" value="NC_010503.1"/>
</dbReference>
<dbReference type="SMR" id="B1AI43"/>
<dbReference type="GeneID" id="29672291"/>
<dbReference type="KEGG" id="upa:UPA3_0057"/>
<dbReference type="HOGENOM" id="CLU_108953_0_1_14"/>
<dbReference type="Proteomes" id="UP000002162">
    <property type="component" value="Chromosome"/>
</dbReference>
<dbReference type="GO" id="GO:0005829">
    <property type="term" value="C:cytosol"/>
    <property type="evidence" value="ECO:0007669"/>
    <property type="project" value="TreeGrafter"/>
</dbReference>
<dbReference type="GO" id="GO:0003723">
    <property type="term" value="F:RNA binding"/>
    <property type="evidence" value="ECO:0007669"/>
    <property type="project" value="UniProtKB-UniRule"/>
</dbReference>
<dbReference type="GO" id="GO:0070929">
    <property type="term" value="P:trans-translation"/>
    <property type="evidence" value="ECO:0007669"/>
    <property type="project" value="UniProtKB-UniRule"/>
</dbReference>
<dbReference type="CDD" id="cd09294">
    <property type="entry name" value="SmpB"/>
    <property type="match status" value="1"/>
</dbReference>
<dbReference type="Gene3D" id="2.40.280.10">
    <property type="match status" value="1"/>
</dbReference>
<dbReference type="HAMAP" id="MF_00023">
    <property type="entry name" value="SmpB"/>
    <property type="match status" value="1"/>
</dbReference>
<dbReference type="InterPro" id="IPR023620">
    <property type="entry name" value="SmpB"/>
</dbReference>
<dbReference type="InterPro" id="IPR000037">
    <property type="entry name" value="SsrA-bd_prot"/>
</dbReference>
<dbReference type="InterPro" id="IPR020081">
    <property type="entry name" value="SsrA-bd_prot_CS"/>
</dbReference>
<dbReference type="NCBIfam" id="NF003843">
    <property type="entry name" value="PRK05422.1"/>
    <property type="match status" value="1"/>
</dbReference>
<dbReference type="NCBIfam" id="TIGR00086">
    <property type="entry name" value="smpB"/>
    <property type="match status" value="1"/>
</dbReference>
<dbReference type="PANTHER" id="PTHR30308:SF2">
    <property type="entry name" value="SSRA-BINDING PROTEIN"/>
    <property type="match status" value="1"/>
</dbReference>
<dbReference type="PANTHER" id="PTHR30308">
    <property type="entry name" value="TMRNA-BINDING COMPONENT OF TRANS-TRANSLATION TAGGING COMPLEX"/>
    <property type="match status" value="1"/>
</dbReference>
<dbReference type="Pfam" id="PF01668">
    <property type="entry name" value="SmpB"/>
    <property type="match status" value="1"/>
</dbReference>
<dbReference type="SUPFAM" id="SSF74982">
    <property type="entry name" value="Small protein B (SmpB)"/>
    <property type="match status" value="1"/>
</dbReference>
<dbReference type="PROSITE" id="PS01317">
    <property type="entry name" value="SSRP"/>
    <property type="match status" value="1"/>
</dbReference>
<name>SSRP_UREP2</name>
<protein>
    <recommendedName>
        <fullName evidence="1">SsrA-binding protein</fullName>
    </recommendedName>
    <alternativeName>
        <fullName evidence="1">Small protein B</fullName>
    </alternativeName>
</protein>
<evidence type="ECO:0000255" key="1">
    <source>
        <dbReference type="HAMAP-Rule" id="MF_00023"/>
    </source>
</evidence>
<feature type="chain" id="PRO_1000074377" description="SsrA-binding protein">
    <location>
        <begin position="1"/>
        <end position="141"/>
    </location>
</feature>
<organism>
    <name type="scientific">Ureaplasma parvum serovar 3 (strain ATCC 27815 / 27 / NCTC 11736)</name>
    <dbReference type="NCBI Taxonomy" id="505682"/>
    <lineage>
        <taxon>Bacteria</taxon>
        <taxon>Bacillati</taxon>
        <taxon>Mycoplasmatota</taxon>
        <taxon>Mycoplasmoidales</taxon>
        <taxon>Mycoplasmoidaceae</taxon>
        <taxon>Ureaplasma</taxon>
    </lineage>
</organism>
<keyword id="KW-0963">Cytoplasm</keyword>
<keyword id="KW-0694">RNA-binding</keyword>
<gene>
    <name evidence="1" type="primary">smpB</name>
    <name type="ordered locus">UPA3_0057</name>
</gene>
<sequence>MIVSNKHARRNYELLDFFECGIVLKGTEVKSISRANCSINEAYVQIIKNQALILNMHVANFFEGNNFNQDPYRNRKLLLHKKEIIRLQHLVKTQHMTIVPTKIYWKNNKLKIEIALGKGKQLHDKREDIKKRDLARETRLF</sequence>
<comment type="function">
    <text evidence="1">Required for rescue of stalled ribosomes mediated by trans-translation. Binds to transfer-messenger RNA (tmRNA), required for stable association of tmRNA with ribosomes. tmRNA and SmpB together mimic tRNA shape, replacing the anticodon stem-loop with SmpB. tmRNA is encoded by the ssrA gene; the 2 termini fold to resemble tRNA(Ala) and it encodes a 'tag peptide', a short internal open reading frame. During trans-translation Ala-aminoacylated tmRNA acts like a tRNA, entering the A-site of stalled ribosomes, displacing the stalled mRNA. The ribosome then switches to translate the ORF on the tmRNA; the nascent peptide is terminated with the 'tag peptide' encoded by the tmRNA and targeted for degradation. The ribosome is freed to recommence translation, which seems to be the essential function of trans-translation.</text>
</comment>
<comment type="subcellular location">
    <subcellularLocation>
        <location evidence="1">Cytoplasm</location>
    </subcellularLocation>
    <text evidence="1">The tmRNA-SmpB complex associates with stalled 70S ribosomes.</text>
</comment>
<comment type="similarity">
    <text evidence="1">Belongs to the SmpB family.</text>
</comment>
<reference key="1">
    <citation type="submission" date="2008-02" db="EMBL/GenBank/DDBJ databases">
        <title>Genome sequence of Ureaplasma parvum serovar 3.</title>
        <authorList>
            <person name="Methe B.A."/>
            <person name="Glass J."/>
            <person name="Waites K."/>
            <person name="Shrivastava S."/>
        </authorList>
    </citation>
    <scope>NUCLEOTIDE SEQUENCE [LARGE SCALE GENOMIC DNA]</scope>
    <source>
        <strain>ATCC 27815 / 27 / NCTC 11736</strain>
    </source>
</reference>